<sequence>MEYIKKLLCTMSVLLLIIFIGGCGNMKDEQKKEEQTNKTDSKEEQIKKSFAKTLDMYPIKNLEDLYDKEGYRDGEFKKGDKGTWTISTDFAKSNKPGEMDSEGMVLHLNRNTRTATGYYTIRTTYDEVGKMTREKNYRVELKNNKIVLLDKVEDENLKHKIENFKFFGQYADFKDLKNYKNGRITINENVPYYEAEYKINNSDGNVKKLRENYPITAKKSPILKLHIDGDIKGSSVGYKQIEYTFSKEKEDETFMSDFLNFGPTKGGNND</sequence>
<feature type="signal peptide" evidence="1">
    <location>
        <begin position="1"/>
        <end position="22"/>
    </location>
</feature>
<feature type="chain" id="PRO_0000282100" description="Uncharacterized lipoprotein SAB0396">
    <location>
        <begin position="23"/>
        <end position="270"/>
    </location>
</feature>
<feature type="lipid moiety-binding region" description="N-palmitoyl cysteine" evidence="1">
    <location>
        <position position="23"/>
    </location>
</feature>
<feature type="lipid moiety-binding region" description="S-diacylglycerol cysteine" evidence="1">
    <location>
        <position position="23"/>
    </location>
</feature>
<organism>
    <name type="scientific">Staphylococcus aureus (strain bovine RF122 / ET3-1)</name>
    <dbReference type="NCBI Taxonomy" id="273036"/>
    <lineage>
        <taxon>Bacteria</taxon>
        <taxon>Bacillati</taxon>
        <taxon>Bacillota</taxon>
        <taxon>Bacilli</taxon>
        <taxon>Bacillales</taxon>
        <taxon>Staphylococcaceae</taxon>
        <taxon>Staphylococcus</taxon>
    </lineage>
</organism>
<dbReference type="EMBL" id="AJ938182">
    <property type="protein sequence ID" value="CAI80084.1"/>
    <property type="status" value="ALT_FRAME"/>
    <property type="molecule type" value="Genomic_DNA"/>
</dbReference>
<dbReference type="SMR" id="Q2YVQ4"/>
<dbReference type="KEGG" id="sab:SAB0396"/>
<dbReference type="HOGENOM" id="CLU_071589_0_1_9"/>
<dbReference type="GO" id="GO:0005886">
    <property type="term" value="C:plasma membrane"/>
    <property type="evidence" value="ECO:0007669"/>
    <property type="project" value="UniProtKB-SubCell"/>
</dbReference>
<dbReference type="Gene3D" id="2.50.20.40">
    <property type="match status" value="1"/>
</dbReference>
<dbReference type="InterPro" id="IPR007595">
    <property type="entry name" value="Csa"/>
</dbReference>
<dbReference type="InterPro" id="IPR038641">
    <property type="entry name" value="Csa_sf"/>
</dbReference>
<dbReference type="NCBIfam" id="TIGR01742">
    <property type="entry name" value="SA_tandem_lipo"/>
    <property type="match status" value="1"/>
</dbReference>
<dbReference type="Pfam" id="PF04507">
    <property type="entry name" value="DUF576"/>
    <property type="match status" value="1"/>
</dbReference>
<dbReference type="PROSITE" id="PS51257">
    <property type="entry name" value="PROKAR_LIPOPROTEIN"/>
    <property type="match status" value="1"/>
</dbReference>
<reference key="1">
    <citation type="journal article" date="2007" name="PLoS ONE">
        <title>Molecular correlates of host specialization in Staphylococcus aureus.</title>
        <authorList>
            <person name="Herron-Olson L."/>
            <person name="Fitzgerald J.R."/>
            <person name="Musser J.M."/>
            <person name="Kapur V."/>
        </authorList>
    </citation>
    <scope>NUCLEOTIDE SEQUENCE [LARGE SCALE GENOMIC DNA]</scope>
    <source>
        <strain>bovine RF122 / ET3-1</strain>
    </source>
</reference>
<keyword id="KW-1003">Cell membrane</keyword>
<keyword id="KW-0449">Lipoprotein</keyword>
<keyword id="KW-0472">Membrane</keyword>
<keyword id="KW-0564">Palmitate</keyword>
<keyword id="KW-0732">Signal</keyword>
<proteinExistence type="inferred from homology"/>
<accession>Q2YVQ4</accession>
<comment type="subcellular location">
    <subcellularLocation>
        <location evidence="1">Cell membrane</location>
        <topology evidence="1">Lipid-anchor</topology>
    </subcellularLocation>
</comment>
<comment type="similarity">
    <text evidence="2">Belongs to the staphylococcal tandem lipoprotein family.</text>
</comment>
<comment type="sequence caution" evidence="2">
    <conflict type="frameshift">
        <sequence resource="EMBL-CDS" id="CAI80084"/>
    </conflict>
</comment>
<protein>
    <recommendedName>
        <fullName>Uncharacterized lipoprotein SAB0396</fullName>
    </recommendedName>
</protein>
<name>Y396_STAAB</name>
<gene>
    <name type="ordered locus">SAB0396</name>
</gene>
<evidence type="ECO:0000255" key="1">
    <source>
        <dbReference type="PROSITE-ProRule" id="PRU00303"/>
    </source>
</evidence>
<evidence type="ECO:0000305" key="2"/>